<sequence length="194" mass="21730">MSISKKIVFVTGNAKKLEEALQILGTSFPIESKKVDLPELQGDPIDISIEKCKIAAREVGGPVLVEDTCLCFNALKGLPGPYVKWFLDKLEPEGLYKLLDAWEDKSAYALCNFAFSEGPDSEPIVFAGKTDGIIVQPRGPRNFGWDPVFQPDGYKETYAEMDKSIKNTISHRTRSLQKVKEFLKSKGYENCKFE</sequence>
<keyword id="KW-0963">Cytoplasm</keyword>
<keyword id="KW-0378">Hydrolase</keyword>
<keyword id="KW-0460">Magnesium</keyword>
<keyword id="KW-0464">Manganese</keyword>
<keyword id="KW-0479">Metal-binding</keyword>
<keyword id="KW-0546">Nucleotide metabolism</keyword>
<keyword id="KW-0547">Nucleotide-binding</keyword>
<keyword id="KW-1185">Reference proteome</keyword>
<feature type="chain" id="PRO_0000328399" description="Inosine triphosphate pyrophosphatase">
    <location>
        <begin position="1"/>
        <end position="194"/>
    </location>
</feature>
<feature type="binding site" evidence="1">
    <location>
        <begin position="11"/>
        <end position="16"/>
    </location>
    <ligand>
        <name>ITP</name>
        <dbReference type="ChEBI" id="CHEBI:61402"/>
    </ligand>
</feature>
<feature type="binding site" evidence="1">
    <location>
        <position position="39"/>
    </location>
    <ligand>
        <name>Mg(2+)</name>
        <dbReference type="ChEBI" id="CHEBI:18420"/>
    </ligand>
</feature>
<feature type="binding site" evidence="1">
    <location>
        <position position="51"/>
    </location>
    <ligand>
        <name>ITP</name>
        <dbReference type="ChEBI" id="CHEBI:61402"/>
    </ligand>
</feature>
<feature type="binding site" evidence="1">
    <location>
        <begin position="67"/>
        <end position="68"/>
    </location>
    <ligand>
        <name>ITP</name>
        <dbReference type="ChEBI" id="CHEBI:61402"/>
    </ligand>
</feature>
<feature type="binding site" evidence="1">
    <location>
        <position position="84"/>
    </location>
    <ligand>
        <name>ITP</name>
        <dbReference type="ChEBI" id="CHEBI:61402"/>
    </ligand>
</feature>
<feature type="binding site" evidence="1">
    <location>
        <begin position="143"/>
        <end position="146"/>
    </location>
    <ligand>
        <name>ITP</name>
        <dbReference type="ChEBI" id="CHEBI:61402"/>
    </ligand>
</feature>
<feature type="binding site" evidence="1">
    <location>
        <position position="166"/>
    </location>
    <ligand>
        <name>ITP</name>
        <dbReference type="ChEBI" id="CHEBI:61402"/>
    </ligand>
</feature>
<feature type="binding site" evidence="1">
    <location>
        <begin position="171"/>
        <end position="172"/>
    </location>
    <ligand>
        <name>ITP</name>
        <dbReference type="ChEBI" id="CHEBI:61402"/>
    </ligand>
</feature>
<evidence type="ECO:0000255" key="1">
    <source>
        <dbReference type="HAMAP-Rule" id="MF_03148"/>
    </source>
</evidence>
<comment type="function">
    <text evidence="1">Pyrophosphatase that hydrolyzes non-canonical purine nucleotides such as inosine triphosphate (ITP), deoxyinosine triphosphate (dITP) or xanthosine 5'-triphosphate (XTP) to their respective monophosphate derivatives. The enzyme does not distinguish between the deoxy- and ribose forms. Probably excludes non-canonical purines from RNA and DNA precursor pools, thus preventing their incorporation into RNA and DNA and avoiding chromosomal lesions.</text>
</comment>
<comment type="catalytic activity">
    <reaction evidence="1">
        <text>ITP + H2O = IMP + diphosphate + H(+)</text>
        <dbReference type="Rhea" id="RHEA:29399"/>
        <dbReference type="ChEBI" id="CHEBI:15377"/>
        <dbReference type="ChEBI" id="CHEBI:15378"/>
        <dbReference type="ChEBI" id="CHEBI:33019"/>
        <dbReference type="ChEBI" id="CHEBI:58053"/>
        <dbReference type="ChEBI" id="CHEBI:61402"/>
        <dbReference type="EC" id="3.6.1.66"/>
    </reaction>
    <physiologicalReaction direction="left-to-right" evidence="1">
        <dbReference type="Rhea" id="RHEA:29400"/>
    </physiologicalReaction>
</comment>
<comment type="catalytic activity">
    <reaction evidence="1">
        <text>dITP + H2O = dIMP + diphosphate + H(+)</text>
        <dbReference type="Rhea" id="RHEA:28342"/>
        <dbReference type="ChEBI" id="CHEBI:15377"/>
        <dbReference type="ChEBI" id="CHEBI:15378"/>
        <dbReference type="ChEBI" id="CHEBI:33019"/>
        <dbReference type="ChEBI" id="CHEBI:61194"/>
        <dbReference type="ChEBI" id="CHEBI:61382"/>
        <dbReference type="EC" id="3.6.1.66"/>
    </reaction>
    <physiologicalReaction direction="left-to-right" evidence="1">
        <dbReference type="Rhea" id="RHEA:28343"/>
    </physiologicalReaction>
</comment>
<comment type="catalytic activity">
    <reaction evidence="1">
        <text>XTP + H2O = XMP + diphosphate + H(+)</text>
        <dbReference type="Rhea" id="RHEA:28610"/>
        <dbReference type="ChEBI" id="CHEBI:15377"/>
        <dbReference type="ChEBI" id="CHEBI:15378"/>
        <dbReference type="ChEBI" id="CHEBI:33019"/>
        <dbReference type="ChEBI" id="CHEBI:57464"/>
        <dbReference type="ChEBI" id="CHEBI:61314"/>
        <dbReference type="EC" id="3.6.1.66"/>
    </reaction>
    <physiologicalReaction direction="left-to-right" evidence="1">
        <dbReference type="Rhea" id="RHEA:28611"/>
    </physiologicalReaction>
</comment>
<comment type="cofactor">
    <cofactor evidence="1">
        <name>Mg(2+)</name>
        <dbReference type="ChEBI" id="CHEBI:18420"/>
    </cofactor>
    <cofactor evidence="1">
        <name>Mn(2+)</name>
        <dbReference type="ChEBI" id="CHEBI:29035"/>
    </cofactor>
    <text evidence="1">Binds 1 divalent metal cation per subunit; can use either Mg(2+) or Mn(2+).</text>
</comment>
<comment type="subunit">
    <text evidence="1">Homodimer.</text>
</comment>
<comment type="subcellular location">
    <subcellularLocation>
        <location evidence="1">Cytoplasm</location>
    </subcellularLocation>
</comment>
<comment type="similarity">
    <text evidence="1">Belongs to the HAM1 NTPase family.</text>
</comment>
<accession>Q54LQ6</accession>
<protein>
    <recommendedName>
        <fullName evidence="1">Inosine triphosphate pyrophosphatase</fullName>
        <shortName evidence="1">ITPase</shortName>
        <shortName evidence="1">Inosine triphosphatase</shortName>
        <ecNumber evidence="1">3.6.1.66</ecNumber>
    </recommendedName>
    <alternativeName>
        <fullName evidence="1">Non-canonical purine NTP pyrophosphatase</fullName>
    </alternativeName>
    <alternativeName>
        <fullName evidence="1">Non-standard purine NTP pyrophosphatase</fullName>
    </alternativeName>
    <alternativeName>
        <fullName evidence="1">Nucleoside-triphosphate diphosphatase</fullName>
    </alternativeName>
    <alternativeName>
        <fullName evidence="1">Nucleoside-triphosphate pyrophosphatase</fullName>
        <shortName evidence="1">NTPase</shortName>
    </alternativeName>
    <alternativeName>
        <fullName evidence="1">XTP/dITP diphosphatase</fullName>
    </alternativeName>
</protein>
<name>ITPA_DICDI</name>
<proteinExistence type="inferred from homology"/>
<dbReference type="EC" id="3.6.1.66" evidence="1"/>
<dbReference type="EMBL" id="AAFI02000086">
    <property type="protein sequence ID" value="EAL64198.1"/>
    <property type="molecule type" value="Genomic_DNA"/>
</dbReference>
<dbReference type="RefSeq" id="XP_637700.1">
    <property type="nucleotide sequence ID" value="XM_632608.1"/>
</dbReference>
<dbReference type="SMR" id="Q54LQ6"/>
<dbReference type="FunCoup" id="Q54LQ6">
    <property type="interactions" value="378"/>
</dbReference>
<dbReference type="STRING" id="44689.Q54LQ6"/>
<dbReference type="PaxDb" id="44689-DDB0238062"/>
<dbReference type="EnsemblProtists" id="EAL64198">
    <property type="protein sequence ID" value="EAL64198"/>
    <property type="gene ID" value="DDB_G0286495"/>
</dbReference>
<dbReference type="GeneID" id="8625642"/>
<dbReference type="KEGG" id="ddi:DDB_G0286495"/>
<dbReference type="dictyBase" id="DDB_G0286495">
    <property type="gene designation" value="itpa"/>
</dbReference>
<dbReference type="VEuPathDB" id="AmoebaDB:DDB_G0286495"/>
<dbReference type="eggNOG" id="KOG3222">
    <property type="taxonomic scope" value="Eukaryota"/>
</dbReference>
<dbReference type="HOGENOM" id="CLU_082080_1_1_1"/>
<dbReference type="InParanoid" id="Q54LQ6"/>
<dbReference type="OMA" id="YDPIFQP"/>
<dbReference type="PhylomeDB" id="Q54LQ6"/>
<dbReference type="Reactome" id="R-DDI-74259">
    <property type="pathway name" value="Purine catabolism"/>
</dbReference>
<dbReference type="Reactome" id="R-DDI-9755088">
    <property type="pathway name" value="Ribavirin ADME"/>
</dbReference>
<dbReference type="PRO" id="PR:Q54LQ6"/>
<dbReference type="Proteomes" id="UP000002195">
    <property type="component" value="Chromosome 4"/>
</dbReference>
<dbReference type="GO" id="GO:0005737">
    <property type="term" value="C:cytoplasm"/>
    <property type="evidence" value="ECO:0000318"/>
    <property type="project" value="GO_Central"/>
</dbReference>
<dbReference type="GO" id="GO:0035870">
    <property type="term" value="F:dITP diphosphatase activity"/>
    <property type="evidence" value="ECO:0007669"/>
    <property type="project" value="RHEA"/>
</dbReference>
<dbReference type="GO" id="GO:0036220">
    <property type="term" value="F:ITP diphosphatase activity"/>
    <property type="evidence" value="ECO:0007669"/>
    <property type="project" value="RHEA"/>
</dbReference>
<dbReference type="GO" id="GO:0046872">
    <property type="term" value="F:metal ion binding"/>
    <property type="evidence" value="ECO:0007669"/>
    <property type="project" value="UniProtKB-KW"/>
</dbReference>
<dbReference type="GO" id="GO:0047429">
    <property type="term" value="F:nucleoside triphosphate diphosphatase activity"/>
    <property type="evidence" value="ECO:0000250"/>
    <property type="project" value="dictyBase"/>
</dbReference>
<dbReference type="GO" id="GO:0000166">
    <property type="term" value="F:nucleotide binding"/>
    <property type="evidence" value="ECO:0007669"/>
    <property type="project" value="UniProtKB-KW"/>
</dbReference>
<dbReference type="GO" id="GO:0036222">
    <property type="term" value="F:XTP diphosphatase activity"/>
    <property type="evidence" value="ECO:0007669"/>
    <property type="project" value="RHEA"/>
</dbReference>
<dbReference type="GO" id="GO:0009204">
    <property type="term" value="P:deoxyribonucleoside triphosphate catabolic process"/>
    <property type="evidence" value="ECO:0000250"/>
    <property type="project" value="dictyBase"/>
</dbReference>
<dbReference type="GO" id="GO:0009143">
    <property type="term" value="P:nucleoside triphosphate catabolic process"/>
    <property type="evidence" value="ECO:0000318"/>
    <property type="project" value="GO_Central"/>
</dbReference>
<dbReference type="GO" id="GO:0009117">
    <property type="term" value="P:nucleotide metabolic process"/>
    <property type="evidence" value="ECO:0007669"/>
    <property type="project" value="UniProtKB-KW"/>
</dbReference>
<dbReference type="CDD" id="cd00515">
    <property type="entry name" value="HAM1"/>
    <property type="match status" value="1"/>
</dbReference>
<dbReference type="FunFam" id="3.90.950.10:FF:000003">
    <property type="entry name" value="Inosine triphosphate pyrophosphatase"/>
    <property type="match status" value="1"/>
</dbReference>
<dbReference type="Gene3D" id="3.90.950.10">
    <property type="match status" value="1"/>
</dbReference>
<dbReference type="HAMAP" id="MF_03148">
    <property type="entry name" value="HAM1_NTPase"/>
    <property type="match status" value="1"/>
</dbReference>
<dbReference type="InterPro" id="IPR027502">
    <property type="entry name" value="ITPase"/>
</dbReference>
<dbReference type="InterPro" id="IPR029001">
    <property type="entry name" value="ITPase-like_fam"/>
</dbReference>
<dbReference type="InterPro" id="IPR002637">
    <property type="entry name" value="RdgB/HAM1"/>
</dbReference>
<dbReference type="PANTHER" id="PTHR11067:SF9">
    <property type="entry name" value="INOSINE TRIPHOSPHATE PYROPHOSPHATASE"/>
    <property type="match status" value="1"/>
</dbReference>
<dbReference type="PANTHER" id="PTHR11067">
    <property type="entry name" value="INOSINE TRIPHOSPHATE PYROPHOSPHATASE/HAM1 PROTEIN"/>
    <property type="match status" value="1"/>
</dbReference>
<dbReference type="Pfam" id="PF01725">
    <property type="entry name" value="Ham1p_like"/>
    <property type="match status" value="1"/>
</dbReference>
<dbReference type="SUPFAM" id="SSF52972">
    <property type="entry name" value="ITPase-like"/>
    <property type="match status" value="1"/>
</dbReference>
<organism>
    <name type="scientific">Dictyostelium discoideum</name>
    <name type="common">Social amoeba</name>
    <dbReference type="NCBI Taxonomy" id="44689"/>
    <lineage>
        <taxon>Eukaryota</taxon>
        <taxon>Amoebozoa</taxon>
        <taxon>Evosea</taxon>
        <taxon>Eumycetozoa</taxon>
        <taxon>Dictyostelia</taxon>
        <taxon>Dictyosteliales</taxon>
        <taxon>Dictyosteliaceae</taxon>
        <taxon>Dictyostelium</taxon>
    </lineage>
</organism>
<gene>
    <name type="primary">itpa</name>
    <name type="ORF">DDB_G0286495</name>
</gene>
<reference key="1">
    <citation type="journal article" date="2005" name="Nature">
        <title>The genome of the social amoeba Dictyostelium discoideum.</title>
        <authorList>
            <person name="Eichinger L."/>
            <person name="Pachebat J.A."/>
            <person name="Gloeckner G."/>
            <person name="Rajandream M.A."/>
            <person name="Sucgang R."/>
            <person name="Berriman M."/>
            <person name="Song J."/>
            <person name="Olsen R."/>
            <person name="Szafranski K."/>
            <person name="Xu Q."/>
            <person name="Tunggal B."/>
            <person name="Kummerfeld S."/>
            <person name="Madera M."/>
            <person name="Konfortov B.A."/>
            <person name="Rivero F."/>
            <person name="Bankier A.T."/>
            <person name="Lehmann R."/>
            <person name="Hamlin N."/>
            <person name="Davies R."/>
            <person name="Gaudet P."/>
            <person name="Fey P."/>
            <person name="Pilcher K."/>
            <person name="Chen G."/>
            <person name="Saunders D."/>
            <person name="Sodergren E.J."/>
            <person name="Davis P."/>
            <person name="Kerhornou A."/>
            <person name="Nie X."/>
            <person name="Hall N."/>
            <person name="Anjard C."/>
            <person name="Hemphill L."/>
            <person name="Bason N."/>
            <person name="Farbrother P."/>
            <person name="Desany B."/>
            <person name="Just E."/>
            <person name="Morio T."/>
            <person name="Rost R."/>
            <person name="Churcher C.M."/>
            <person name="Cooper J."/>
            <person name="Haydock S."/>
            <person name="van Driessche N."/>
            <person name="Cronin A."/>
            <person name="Goodhead I."/>
            <person name="Muzny D.M."/>
            <person name="Mourier T."/>
            <person name="Pain A."/>
            <person name="Lu M."/>
            <person name="Harper D."/>
            <person name="Lindsay R."/>
            <person name="Hauser H."/>
            <person name="James K.D."/>
            <person name="Quiles M."/>
            <person name="Madan Babu M."/>
            <person name="Saito T."/>
            <person name="Buchrieser C."/>
            <person name="Wardroper A."/>
            <person name="Felder M."/>
            <person name="Thangavelu M."/>
            <person name="Johnson D."/>
            <person name="Knights A."/>
            <person name="Loulseged H."/>
            <person name="Mungall K.L."/>
            <person name="Oliver K."/>
            <person name="Price C."/>
            <person name="Quail M.A."/>
            <person name="Urushihara H."/>
            <person name="Hernandez J."/>
            <person name="Rabbinowitsch E."/>
            <person name="Steffen D."/>
            <person name="Sanders M."/>
            <person name="Ma J."/>
            <person name="Kohara Y."/>
            <person name="Sharp S."/>
            <person name="Simmonds M.N."/>
            <person name="Spiegler S."/>
            <person name="Tivey A."/>
            <person name="Sugano S."/>
            <person name="White B."/>
            <person name="Walker D."/>
            <person name="Woodward J.R."/>
            <person name="Winckler T."/>
            <person name="Tanaka Y."/>
            <person name="Shaulsky G."/>
            <person name="Schleicher M."/>
            <person name="Weinstock G.M."/>
            <person name="Rosenthal A."/>
            <person name="Cox E.C."/>
            <person name="Chisholm R.L."/>
            <person name="Gibbs R.A."/>
            <person name="Loomis W.F."/>
            <person name="Platzer M."/>
            <person name="Kay R.R."/>
            <person name="Williams J.G."/>
            <person name="Dear P.H."/>
            <person name="Noegel A.A."/>
            <person name="Barrell B.G."/>
            <person name="Kuspa A."/>
        </authorList>
    </citation>
    <scope>NUCLEOTIDE SEQUENCE [LARGE SCALE GENOMIC DNA]</scope>
    <source>
        <strain>AX4</strain>
    </source>
</reference>